<organism>
    <name type="scientific">Staphylococcus aureus (strain N315)</name>
    <dbReference type="NCBI Taxonomy" id="158879"/>
    <lineage>
        <taxon>Bacteria</taxon>
        <taxon>Bacillati</taxon>
        <taxon>Bacillota</taxon>
        <taxon>Bacilli</taxon>
        <taxon>Bacillales</taxon>
        <taxon>Staphylococcaceae</taxon>
        <taxon>Staphylococcus</taxon>
    </lineage>
</organism>
<gene>
    <name evidence="1" type="primary">mobA</name>
    <name type="ordered locus">SA2064</name>
</gene>
<reference key="1">
    <citation type="journal article" date="2001" name="Lancet">
        <title>Whole genome sequencing of meticillin-resistant Staphylococcus aureus.</title>
        <authorList>
            <person name="Kuroda M."/>
            <person name="Ohta T."/>
            <person name="Uchiyama I."/>
            <person name="Baba T."/>
            <person name="Yuzawa H."/>
            <person name="Kobayashi I."/>
            <person name="Cui L."/>
            <person name="Oguchi A."/>
            <person name="Aoki K."/>
            <person name="Nagai Y."/>
            <person name="Lian J.-Q."/>
            <person name="Ito T."/>
            <person name="Kanamori M."/>
            <person name="Matsumaru H."/>
            <person name="Maruyama A."/>
            <person name="Murakami H."/>
            <person name="Hosoyama A."/>
            <person name="Mizutani-Ui Y."/>
            <person name="Takahashi N.K."/>
            <person name="Sawano T."/>
            <person name="Inoue R."/>
            <person name="Kaito C."/>
            <person name="Sekimizu K."/>
            <person name="Hirakawa H."/>
            <person name="Kuhara S."/>
            <person name="Goto S."/>
            <person name="Yabuzaki J."/>
            <person name="Kanehisa M."/>
            <person name="Yamashita A."/>
            <person name="Oshima K."/>
            <person name="Furuya K."/>
            <person name="Yoshino C."/>
            <person name="Shiba T."/>
            <person name="Hattori M."/>
            <person name="Ogasawara N."/>
            <person name="Hayashi H."/>
            <person name="Hiramatsu K."/>
        </authorList>
    </citation>
    <scope>NUCLEOTIDE SEQUENCE [LARGE SCALE GENOMIC DNA]</scope>
    <source>
        <strain>N315</strain>
    </source>
</reference>
<reference key="2">
    <citation type="submission" date="2007-10" db="UniProtKB">
        <title>Shotgun proteomic analysis of total and membrane protein extracts of S. aureus strain N315.</title>
        <authorList>
            <person name="Vaezzadeh A.R."/>
            <person name="Deshusses J."/>
            <person name="Lescuyer P."/>
            <person name="Hochstrasser D.F."/>
        </authorList>
    </citation>
    <scope>IDENTIFICATION BY MASS SPECTROMETRY [LARGE SCALE ANALYSIS]</scope>
    <source>
        <strain>N315</strain>
    </source>
</reference>
<protein>
    <recommendedName>
        <fullName evidence="1">Probable molybdenum cofactor guanylyltransferase</fullName>
        <shortName evidence="1">MoCo guanylyltransferase</shortName>
        <ecNumber evidence="1">2.7.7.77</ecNumber>
    </recommendedName>
    <alternativeName>
        <fullName evidence="1">GTP:molybdopterin guanylyltransferase</fullName>
    </alternativeName>
    <alternativeName>
        <fullName evidence="1">Mo-MPT guanylyltransferase</fullName>
    </alternativeName>
    <alternativeName>
        <fullName evidence="1">Molybdopterin guanylyltransferase</fullName>
    </alternativeName>
    <alternativeName>
        <fullName evidence="1">Molybdopterin-guanine dinucleotide synthase</fullName>
        <shortName evidence="1">MGD synthase</shortName>
    </alternativeName>
</protein>
<accession>P65405</accession>
<accession>Q99S03</accession>
<evidence type="ECO:0000255" key="1">
    <source>
        <dbReference type="HAMAP-Rule" id="MF_00316"/>
    </source>
</evidence>
<comment type="function">
    <text evidence="1">Transfers a GMP moiety from GTP to Mo-molybdopterin (Mo-MPT) cofactor (Moco or molybdenum cofactor) to form Mo-molybdopterin guanine dinucleotide (Mo-MGD) cofactor.</text>
</comment>
<comment type="catalytic activity">
    <reaction evidence="1">
        <text>Mo-molybdopterin + GTP + H(+) = Mo-molybdopterin guanine dinucleotide + diphosphate</text>
        <dbReference type="Rhea" id="RHEA:34243"/>
        <dbReference type="ChEBI" id="CHEBI:15378"/>
        <dbReference type="ChEBI" id="CHEBI:33019"/>
        <dbReference type="ChEBI" id="CHEBI:37565"/>
        <dbReference type="ChEBI" id="CHEBI:71302"/>
        <dbReference type="ChEBI" id="CHEBI:71310"/>
        <dbReference type="EC" id="2.7.7.77"/>
    </reaction>
</comment>
<comment type="cofactor">
    <cofactor evidence="1">
        <name>Mg(2+)</name>
        <dbReference type="ChEBI" id="CHEBI:18420"/>
    </cofactor>
</comment>
<comment type="subcellular location">
    <subcellularLocation>
        <location evidence="1">Cytoplasm</location>
    </subcellularLocation>
</comment>
<comment type="domain">
    <text evidence="1">The N-terminal domain determines nucleotide recognition and specific binding, while the C-terminal domain determines the specific binding to the target protein.</text>
</comment>
<comment type="similarity">
    <text evidence="1">Belongs to the MobA family.</text>
</comment>
<feature type="chain" id="PRO_0000134913" description="Probable molybdenum cofactor guanylyltransferase">
    <location>
        <begin position="1"/>
        <end position="199"/>
    </location>
</feature>
<feature type="binding site" evidence="1">
    <location>
        <begin position="6"/>
        <end position="8"/>
    </location>
    <ligand>
        <name>GTP</name>
        <dbReference type="ChEBI" id="CHEBI:37565"/>
    </ligand>
</feature>
<feature type="binding site" evidence="1">
    <location>
        <position position="18"/>
    </location>
    <ligand>
        <name>GTP</name>
        <dbReference type="ChEBI" id="CHEBI:37565"/>
    </ligand>
</feature>
<feature type="binding site" evidence="1">
    <location>
        <position position="65"/>
    </location>
    <ligand>
        <name>GTP</name>
        <dbReference type="ChEBI" id="CHEBI:37565"/>
    </ligand>
</feature>
<feature type="binding site" evidence="1">
    <location>
        <position position="97"/>
    </location>
    <ligand>
        <name>GTP</name>
        <dbReference type="ChEBI" id="CHEBI:37565"/>
    </ligand>
</feature>
<feature type="binding site" evidence="1">
    <location>
        <position position="97"/>
    </location>
    <ligand>
        <name>Mg(2+)</name>
        <dbReference type="ChEBI" id="CHEBI:18420"/>
    </ligand>
</feature>
<proteinExistence type="evidence at protein level"/>
<name>MOBA_STAAN</name>
<dbReference type="EC" id="2.7.7.77" evidence="1"/>
<dbReference type="EMBL" id="BA000018">
    <property type="protein sequence ID" value="BAB43361.1"/>
    <property type="molecule type" value="Genomic_DNA"/>
</dbReference>
<dbReference type="PIR" id="H90024">
    <property type="entry name" value="H90024"/>
</dbReference>
<dbReference type="RefSeq" id="WP_000643986.1">
    <property type="nucleotide sequence ID" value="NC_002745.2"/>
</dbReference>
<dbReference type="SMR" id="P65405"/>
<dbReference type="EnsemblBacteria" id="BAB43361">
    <property type="protein sequence ID" value="BAB43361"/>
    <property type="gene ID" value="BAB43361"/>
</dbReference>
<dbReference type="KEGG" id="sau:SA2064"/>
<dbReference type="HOGENOM" id="CLU_055597_2_0_9"/>
<dbReference type="GO" id="GO:0005737">
    <property type="term" value="C:cytoplasm"/>
    <property type="evidence" value="ECO:0007669"/>
    <property type="project" value="UniProtKB-SubCell"/>
</dbReference>
<dbReference type="GO" id="GO:0005525">
    <property type="term" value="F:GTP binding"/>
    <property type="evidence" value="ECO:0007669"/>
    <property type="project" value="UniProtKB-UniRule"/>
</dbReference>
<dbReference type="GO" id="GO:0046872">
    <property type="term" value="F:metal ion binding"/>
    <property type="evidence" value="ECO:0007669"/>
    <property type="project" value="UniProtKB-KW"/>
</dbReference>
<dbReference type="GO" id="GO:0061603">
    <property type="term" value="F:molybdenum cofactor guanylyltransferase activity"/>
    <property type="evidence" value="ECO:0007669"/>
    <property type="project" value="UniProtKB-EC"/>
</dbReference>
<dbReference type="GO" id="GO:0006777">
    <property type="term" value="P:Mo-molybdopterin cofactor biosynthetic process"/>
    <property type="evidence" value="ECO:0007669"/>
    <property type="project" value="UniProtKB-KW"/>
</dbReference>
<dbReference type="CDD" id="cd02503">
    <property type="entry name" value="MobA"/>
    <property type="match status" value="1"/>
</dbReference>
<dbReference type="Gene3D" id="3.90.550.10">
    <property type="entry name" value="Spore Coat Polysaccharide Biosynthesis Protein SpsA, Chain A"/>
    <property type="match status" value="1"/>
</dbReference>
<dbReference type="HAMAP" id="MF_00316">
    <property type="entry name" value="MobA"/>
    <property type="match status" value="1"/>
</dbReference>
<dbReference type="InterPro" id="IPR025877">
    <property type="entry name" value="MobA-like_NTP_Trfase"/>
</dbReference>
<dbReference type="InterPro" id="IPR013482">
    <property type="entry name" value="Molybde_CF_guanTrfase"/>
</dbReference>
<dbReference type="InterPro" id="IPR029044">
    <property type="entry name" value="Nucleotide-diphossugar_trans"/>
</dbReference>
<dbReference type="NCBIfam" id="NF001457">
    <property type="entry name" value="PRK00317.1-3"/>
    <property type="match status" value="1"/>
</dbReference>
<dbReference type="PANTHER" id="PTHR19136">
    <property type="entry name" value="MOLYBDENUM COFACTOR GUANYLYLTRANSFERASE"/>
    <property type="match status" value="1"/>
</dbReference>
<dbReference type="PANTHER" id="PTHR19136:SF81">
    <property type="entry name" value="MOLYBDENUM COFACTOR GUANYLYLTRANSFERASE"/>
    <property type="match status" value="1"/>
</dbReference>
<dbReference type="Pfam" id="PF12804">
    <property type="entry name" value="NTP_transf_3"/>
    <property type="match status" value="1"/>
</dbReference>
<dbReference type="SUPFAM" id="SSF53448">
    <property type="entry name" value="Nucleotide-diphospho-sugar transferases"/>
    <property type="match status" value="1"/>
</dbReference>
<sequence length="199" mass="22556">MKAIILAGGHSVRFGKPKAFAEVNGETFYSRVIKTLESTNMFNEIIISTNAQLATQFKYPNVVIDDENHNDKGPLAGIYTIMKQHPEEELFFVVSVDTPMITGKAVSTLYQFLVSHLIENHLDVAAFKEDGRFIPTIAFYSPNALGAITKALHSDNYSFKNIYHELSTDYLDVRDVDAPSYWYKNINYQHDLDALIQKL</sequence>
<keyword id="KW-0963">Cytoplasm</keyword>
<keyword id="KW-0342">GTP-binding</keyword>
<keyword id="KW-0460">Magnesium</keyword>
<keyword id="KW-0479">Metal-binding</keyword>
<keyword id="KW-0501">Molybdenum cofactor biosynthesis</keyword>
<keyword id="KW-0547">Nucleotide-binding</keyword>
<keyword id="KW-0808">Transferase</keyword>